<evidence type="ECO:0000269" key="1">
    <source>
    </source>
</evidence>
<evidence type="ECO:0000269" key="2">
    <source>
    </source>
</evidence>
<evidence type="ECO:0000305" key="3"/>
<evidence type="ECO:0000305" key="4">
    <source>
    </source>
</evidence>
<evidence type="ECO:0007744" key="5">
    <source>
        <dbReference type="PDB" id="1N1Z"/>
    </source>
</evidence>
<evidence type="ECO:0007829" key="6">
    <source>
        <dbReference type="PDB" id="1N1B"/>
    </source>
</evidence>
<evidence type="ECO:0007829" key="7">
    <source>
        <dbReference type="PDB" id="1N1Z"/>
    </source>
</evidence>
<organism>
    <name type="scientific">Salvia officinalis</name>
    <name type="common">Sage</name>
    <dbReference type="NCBI Taxonomy" id="38868"/>
    <lineage>
        <taxon>Eukaryota</taxon>
        <taxon>Viridiplantae</taxon>
        <taxon>Streptophyta</taxon>
        <taxon>Embryophyta</taxon>
        <taxon>Tracheophyta</taxon>
        <taxon>Spermatophyta</taxon>
        <taxon>Magnoliopsida</taxon>
        <taxon>eudicotyledons</taxon>
        <taxon>Gunneridae</taxon>
        <taxon>Pentapetalae</taxon>
        <taxon>asterids</taxon>
        <taxon>lamiids</taxon>
        <taxon>Lamiales</taxon>
        <taxon>Lamiaceae</taxon>
        <taxon>Nepetoideae</taxon>
        <taxon>Mentheae</taxon>
        <taxon>Salviinae</taxon>
        <taxon>Salvia</taxon>
        <taxon>Salvia incertae sedis</taxon>
    </lineage>
</organism>
<accession>O81192</accession>
<keyword id="KW-0002">3D-structure</keyword>
<keyword id="KW-0150">Chloroplast</keyword>
<keyword id="KW-0413">Isomerase</keyword>
<keyword id="KW-0456">Lyase</keyword>
<keyword id="KW-0460">Magnesium</keyword>
<keyword id="KW-0479">Metal-binding</keyword>
<keyword id="KW-0934">Plastid</keyword>
<keyword id="KW-0809">Transit peptide</keyword>
<comment type="function">
    <text evidence="2">Catalyzes the formation of the (+)-camphor precursor (+)-bornyl diphosphate from geranyl diphosphate. The enzyme also produces significant amounts of (+)-alpha-pinene, (+)-camphene, and (+-)-limonene.</text>
</comment>
<comment type="catalytic activity">
    <reaction evidence="2">
        <text>(2E)-geranyl diphosphate = (2S,4R)-bornyl diphosphate</text>
        <dbReference type="Rhea" id="RHEA:18209"/>
        <dbReference type="ChEBI" id="CHEBI:57293"/>
        <dbReference type="ChEBI" id="CHEBI:58057"/>
        <dbReference type="EC" id="5.5.1.8"/>
    </reaction>
</comment>
<comment type="catalytic activity">
    <reaction evidence="2">
        <text>(2E)-geranyl diphosphate = (1R,4S)-camphene + diphosphate</text>
        <dbReference type="Rhea" id="RHEA:32567"/>
        <dbReference type="ChEBI" id="CHEBI:20"/>
        <dbReference type="ChEBI" id="CHEBI:33019"/>
        <dbReference type="ChEBI" id="CHEBI:58057"/>
        <dbReference type="EC" id="4.2.3.116"/>
    </reaction>
</comment>
<comment type="catalytic activity">
    <reaction evidence="2">
        <text>(2E)-geranyl diphosphate = (1R,5R)-alpha-pinene + diphosphate</text>
        <dbReference type="Rhea" id="RHEA:32575"/>
        <dbReference type="ChEBI" id="CHEBI:28261"/>
        <dbReference type="ChEBI" id="CHEBI:33019"/>
        <dbReference type="ChEBI" id="CHEBI:58057"/>
        <dbReference type="EC" id="4.2.3.121"/>
    </reaction>
</comment>
<comment type="cofactor">
    <cofactor evidence="1">
        <name>Mg(2+)</name>
        <dbReference type="ChEBI" id="CHEBI:18420"/>
    </cofactor>
    <text evidence="1">Binds 3 Mg(2+) ions per subunit.</text>
</comment>
<comment type="pathway">
    <text>Terpene metabolism; (R)-camphor biosynthesis.</text>
</comment>
<comment type="subunit">
    <text>Homodimer.</text>
</comment>
<comment type="subcellular location">
    <subcellularLocation>
        <location>Plastid</location>
        <location>Chloroplast</location>
    </subcellularLocation>
</comment>
<comment type="domain">
    <text evidence="4">The Asp-Asp-Xaa-Xaa-Asp/Glu (DDXXD/E) motif is important for the catalytic activity, presumably through binding to Mg(2+).</text>
</comment>
<comment type="similarity">
    <text evidence="3">Belongs to the terpene synthase family.</text>
</comment>
<proteinExistence type="evidence at protein level"/>
<protein>
    <recommendedName>
        <fullName>(+)-bornyl diphosphate synthase, chloroplastic</fullName>
        <shortName>BPPS</shortName>
        <ecNumber>5.5.1.8</ecNumber>
    </recommendedName>
    <alternativeName>
        <fullName>(+)-alpha-pinene synthase</fullName>
        <ecNumber>4.2.3.121</ecNumber>
    </alternativeName>
    <alternativeName>
        <fullName>(+)-camphene synthase</fullName>
        <ecNumber>4.2.3.116</ecNumber>
    </alternativeName>
    <alternativeName>
        <fullName>SBS</fullName>
    </alternativeName>
</protein>
<reference key="1">
    <citation type="journal article" date="1998" name="J. Biol. Chem.">
        <title>Monoterpene synthases from common sage (Salvia officinalis). cDNA isolation, characterization, and functional expression of (+)-sabinene synthase, 1,8-cineole synthase, and (+)-bornyl diphosphate synthase.</title>
        <authorList>
            <person name="Wise M.L."/>
            <person name="Savage T.J."/>
            <person name="Katahira E."/>
            <person name="Croteau R."/>
        </authorList>
    </citation>
    <scope>NUCLEOTIDE SEQUENCE [MRNA]</scope>
    <scope>FUNCTION</scope>
    <scope>CATALYTIC ACTIVITY</scope>
</reference>
<reference key="2">
    <citation type="journal article" date="2002" name="Proc. Natl. Acad. Sci. U.S.A.">
        <title>Bornyl diphosphate synthase: structure and strategy for carbocation manipulation by a terpenoid cyclase.</title>
        <authorList>
            <person name="Whittington D.A."/>
            <person name="Wise M.L."/>
            <person name="Urbansky M."/>
            <person name="Coates R.M."/>
            <person name="Croteau R.B."/>
            <person name="Christianson D.W."/>
        </authorList>
    </citation>
    <scope>X-RAY CRYSTALLOGRAPHY (2.0 ANGSTROMS) OF 50-598 IN COMPLEXES WITH MAGNESIUM IONS; GERANYL DIPHOSPHATE AND BORNYL DIPHOSPHATE</scope>
    <scope>COFACTOR</scope>
</reference>
<name>BPPS_SALOF</name>
<dbReference type="EC" id="5.5.1.8"/>
<dbReference type="EC" id="4.2.3.121"/>
<dbReference type="EC" id="4.2.3.116"/>
<dbReference type="EMBL" id="AF051900">
    <property type="protein sequence ID" value="AAC26017.1"/>
    <property type="molecule type" value="mRNA"/>
</dbReference>
<dbReference type="PDB" id="1N1B">
    <property type="method" value="X-ray"/>
    <property type="resolution" value="2.00 A"/>
    <property type="chains" value="A/B=50-598"/>
</dbReference>
<dbReference type="PDB" id="1N1Z">
    <property type="method" value="X-ray"/>
    <property type="resolution" value="2.30 A"/>
    <property type="chains" value="A/B=50-598"/>
</dbReference>
<dbReference type="PDB" id="1N20">
    <property type="method" value="X-ray"/>
    <property type="resolution" value="2.30 A"/>
    <property type="chains" value="A/B=50-598"/>
</dbReference>
<dbReference type="PDB" id="1N21">
    <property type="method" value="X-ray"/>
    <property type="resolution" value="3.10 A"/>
    <property type="chains" value="A=50-598"/>
</dbReference>
<dbReference type="PDB" id="1N22">
    <property type="method" value="X-ray"/>
    <property type="resolution" value="2.40 A"/>
    <property type="chains" value="A/B=50-598"/>
</dbReference>
<dbReference type="PDB" id="1N23">
    <property type="method" value="X-ray"/>
    <property type="resolution" value="2.40 A"/>
    <property type="chains" value="A/B=50-598"/>
</dbReference>
<dbReference type="PDB" id="1N24">
    <property type="method" value="X-ray"/>
    <property type="resolution" value="2.30 A"/>
    <property type="chains" value="A/B=50-598"/>
</dbReference>
<dbReference type="PDBsum" id="1N1B"/>
<dbReference type="PDBsum" id="1N1Z"/>
<dbReference type="PDBsum" id="1N20"/>
<dbReference type="PDBsum" id="1N21"/>
<dbReference type="PDBsum" id="1N22"/>
<dbReference type="PDBsum" id="1N23"/>
<dbReference type="PDBsum" id="1N24"/>
<dbReference type="SMR" id="O81192"/>
<dbReference type="KEGG" id="ag:AAC26017"/>
<dbReference type="BioCyc" id="MetaCyc:MONOMER-13764"/>
<dbReference type="BRENDA" id="5.5.1.8">
    <property type="organism ID" value="5564"/>
</dbReference>
<dbReference type="SABIO-RK" id="O81192"/>
<dbReference type="UniPathway" id="UPA00720"/>
<dbReference type="EvolutionaryTrace" id="O81192"/>
<dbReference type="GO" id="GO:0009507">
    <property type="term" value="C:chloroplast"/>
    <property type="evidence" value="ECO:0007669"/>
    <property type="project" value="UniProtKB-SubCell"/>
</dbReference>
<dbReference type="GO" id="GO:0102703">
    <property type="term" value="F:camphene synthase activity"/>
    <property type="evidence" value="ECO:0000314"/>
    <property type="project" value="UniProtKB"/>
</dbReference>
<dbReference type="GO" id="GO:0047926">
    <property type="term" value="F:geranyl-diphosphate cyclase activity"/>
    <property type="evidence" value="ECO:0000314"/>
    <property type="project" value="UniProtKB"/>
</dbReference>
<dbReference type="GO" id="GO:0000287">
    <property type="term" value="F:magnesium ion binding"/>
    <property type="evidence" value="ECO:0000314"/>
    <property type="project" value="UniProtKB"/>
</dbReference>
<dbReference type="GO" id="GO:0050550">
    <property type="term" value="F:pinene synthase activity"/>
    <property type="evidence" value="ECO:0007669"/>
    <property type="project" value="UniProtKB-EC"/>
</dbReference>
<dbReference type="GO" id="GO:0042803">
    <property type="term" value="F:protein homodimerization activity"/>
    <property type="evidence" value="ECO:0000314"/>
    <property type="project" value="UniProtKB"/>
</dbReference>
<dbReference type="GO" id="GO:0046211">
    <property type="term" value="P:(+)-camphor biosynthetic process"/>
    <property type="evidence" value="ECO:0000314"/>
    <property type="project" value="UniProtKB"/>
</dbReference>
<dbReference type="GO" id="GO:0016102">
    <property type="term" value="P:diterpenoid biosynthetic process"/>
    <property type="evidence" value="ECO:0007669"/>
    <property type="project" value="InterPro"/>
</dbReference>
<dbReference type="CDD" id="cd00684">
    <property type="entry name" value="Terpene_cyclase_plant_C1"/>
    <property type="match status" value="1"/>
</dbReference>
<dbReference type="FunFam" id="1.10.600.10:FF:000007">
    <property type="entry name" value="Isoprene synthase, chloroplastic"/>
    <property type="match status" value="1"/>
</dbReference>
<dbReference type="FunFam" id="1.50.10.130:FF:000001">
    <property type="entry name" value="Isoprene synthase, chloroplastic"/>
    <property type="match status" value="1"/>
</dbReference>
<dbReference type="Gene3D" id="1.10.600.10">
    <property type="entry name" value="Farnesyl Diphosphate Synthase"/>
    <property type="match status" value="1"/>
</dbReference>
<dbReference type="Gene3D" id="1.50.10.130">
    <property type="entry name" value="Terpene synthase, N-terminal domain"/>
    <property type="match status" value="1"/>
</dbReference>
<dbReference type="InterPro" id="IPR008949">
    <property type="entry name" value="Isoprenoid_synthase_dom_sf"/>
</dbReference>
<dbReference type="InterPro" id="IPR044814">
    <property type="entry name" value="Terpene_cyclase_plant_C1"/>
</dbReference>
<dbReference type="InterPro" id="IPR001906">
    <property type="entry name" value="Terpene_synth_N"/>
</dbReference>
<dbReference type="InterPro" id="IPR036965">
    <property type="entry name" value="Terpene_synth_N_sf"/>
</dbReference>
<dbReference type="InterPro" id="IPR050148">
    <property type="entry name" value="Terpene_synthase-like"/>
</dbReference>
<dbReference type="InterPro" id="IPR005630">
    <property type="entry name" value="Terpene_synthase_metal-bd"/>
</dbReference>
<dbReference type="InterPro" id="IPR008930">
    <property type="entry name" value="Terpenoid_cyclase/PrenylTrfase"/>
</dbReference>
<dbReference type="PANTHER" id="PTHR31225">
    <property type="entry name" value="OS04G0344100 PROTEIN-RELATED"/>
    <property type="match status" value="1"/>
</dbReference>
<dbReference type="PANTHER" id="PTHR31225:SF9">
    <property type="entry name" value="TERPENE SYNTHASE 10"/>
    <property type="match status" value="1"/>
</dbReference>
<dbReference type="Pfam" id="PF01397">
    <property type="entry name" value="Terpene_synth"/>
    <property type="match status" value="1"/>
</dbReference>
<dbReference type="Pfam" id="PF03936">
    <property type="entry name" value="Terpene_synth_C"/>
    <property type="match status" value="1"/>
</dbReference>
<dbReference type="SFLD" id="SFLDS00005">
    <property type="entry name" value="Isoprenoid_Synthase_Type_I"/>
    <property type="match status" value="1"/>
</dbReference>
<dbReference type="SFLD" id="SFLDG01604">
    <property type="entry name" value="Terpene_Cyclase_Like_1_C_Termi"/>
    <property type="match status" value="1"/>
</dbReference>
<dbReference type="SFLD" id="SFLDG01014">
    <property type="entry name" value="Terpene_Cyclase_Like_1_N-term"/>
    <property type="match status" value="1"/>
</dbReference>
<dbReference type="SUPFAM" id="SSF48239">
    <property type="entry name" value="Terpenoid cyclases/Protein prenyltransferases"/>
    <property type="match status" value="1"/>
</dbReference>
<dbReference type="SUPFAM" id="SSF48576">
    <property type="entry name" value="Terpenoid synthases"/>
    <property type="match status" value="1"/>
</dbReference>
<sequence>MSIISMNVSILSKPLNCLHNLERRPSKALLVPCTAPTARLRASCSSKLQEAHQIRRSGNYQPALWDSNYIQSLNTPYTEERHLDRKAELIVQVRILLKEKMEPVQQLELIHDLKYLGLSDFFQDEIKEILGVIYNEHKCFHNNEVEKMDLYFTALGFRLLRQHGFNISQDVFNCFKNEKGIDFKASLAQDTKGMLQLYEASFLLRKGEDTLELAREFATKCLQKKLDEGGNEIDENLLLWIRHSLDLPLHWRIQSVEARWFIDAYARRPDMNPLIFELAKLNFNIIQATHQQELKDLSRWWSRLCFPEKLPFVRDRLVESFFWAVGMFEPHQHGYQRKMAATIIVLATVIDDIYDVYGTLDELELFTDTFKRWDTESITRLPYYMQLCYWGVHNYISDAAYDILKEHGFFCLQYLRKSVVDLVEAYFHEAKWYHSGYTPSLDEYLNIAKISVASPAIISPTYFTFANASHDTAVIDSLYQYHDILCLAGIILRLPDDLGTSYFELARGDVPKTIQCYMKETNASEEEAVEHVKFLIREAWKDMNTAIAAGYPFPDGMVAGAANIGRVAQFIYLHGDGFGVQHSKTYEHIAGLLFEPYA</sequence>
<feature type="transit peptide" description="Chloroplast" evidence="3">
    <location>
        <begin position="1"/>
        <end position="54"/>
    </location>
</feature>
<feature type="chain" id="PRO_0000033622" description="(+)-bornyl diphosphate synthase, chloroplastic">
    <location>
        <begin position="55"/>
        <end position="598"/>
    </location>
</feature>
<feature type="short sequence motif" description="DDXXD motif" evidence="3">
    <location>
        <begin position="351"/>
        <end position="355"/>
    </location>
</feature>
<feature type="binding site" evidence="1 5">
    <location>
        <position position="314"/>
    </location>
    <ligand>
        <name>substrate</name>
    </ligand>
</feature>
<feature type="binding site" evidence="1 5">
    <location>
        <position position="351"/>
    </location>
    <ligand>
        <name>Mg(2+)</name>
        <dbReference type="ChEBI" id="CHEBI:18420"/>
        <label>1</label>
    </ligand>
</feature>
<feature type="binding site" evidence="1 5">
    <location>
        <position position="351"/>
    </location>
    <ligand>
        <name>Mg(2+)</name>
        <dbReference type="ChEBI" id="CHEBI:18420"/>
        <label>2</label>
    </ligand>
</feature>
<feature type="binding site" evidence="1 5">
    <location>
        <position position="355"/>
    </location>
    <ligand>
        <name>Mg(2+)</name>
        <dbReference type="ChEBI" id="CHEBI:18420"/>
        <label>1</label>
    </ligand>
</feature>
<feature type="binding site" evidence="1 5">
    <location>
        <position position="355"/>
    </location>
    <ligand>
        <name>Mg(2+)</name>
        <dbReference type="ChEBI" id="CHEBI:18420"/>
        <label>2</label>
    </ligand>
</feature>
<feature type="binding site" evidence="1 5">
    <location>
        <position position="493"/>
    </location>
    <ligand>
        <name>substrate</name>
    </ligand>
</feature>
<feature type="binding site" evidence="1 5">
    <location>
        <position position="496"/>
    </location>
    <ligand>
        <name>Mg(2+)</name>
        <dbReference type="ChEBI" id="CHEBI:18420"/>
        <label>3</label>
    </ligand>
</feature>
<feature type="binding site" evidence="1 5">
    <location>
        <position position="500"/>
    </location>
    <ligand>
        <name>Mg(2+)</name>
        <dbReference type="ChEBI" id="CHEBI:18420"/>
        <label>3</label>
    </ligand>
</feature>
<feature type="binding site" evidence="1 5">
    <location>
        <position position="500"/>
    </location>
    <ligand>
        <name>substrate</name>
    </ligand>
</feature>
<feature type="binding site" evidence="1 5">
    <location>
        <position position="504"/>
    </location>
    <ligand>
        <name>Mg(2+)</name>
        <dbReference type="ChEBI" id="CHEBI:18420"/>
        <label>3</label>
    </ligand>
</feature>
<feature type="binding site" evidence="1 5">
    <location>
        <position position="512"/>
    </location>
    <ligand>
        <name>substrate</name>
    </ligand>
</feature>
<feature type="helix" evidence="6">
    <location>
        <begin position="67"/>
        <end position="72"/>
    </location>
</feature>
<feature type="helix" evidence="6">
    <location>
        <begin position="80"/>
        <end position="98"/>
    </location>
</feature>
<feature type="helix" evidence="6">
    <location>
        <begin position="103"/>
        <end position="115"/>
    </location>
</feature>
<feature type="helix" evidence="6">
    <location>
        <begin position="119"/>
        <end position="122"/>
    </location>
</feature>
<feature type="helix" evidence="6">
    <location>
        <begin position="123"/>
        <end position="136"/>
    </location>
</feature>
<feature type="helix" evidence="6">
    <location>
        <begin position="138"/>
        <end position="142"/>
    </location>
</feature>
<feature type="helix" evidence="6">
    <location>
        <begin position="150"/>
        <end position="162"/>
    </location>
</feature>
<feature type="helix" evidence="6">
    <location>
        <begin position="169"/>
        <end position="175"/>
    </location>
</feature>
<feature type="strand" evidence="6">
    <location>
        <begin position="180"/>
        <end position="183"/>
    </location>
</feature>
<feature type="helix" evidence="6">
    <location>
        <begin position="185"/>
        <end position="189"/>
    </location>
</feature>
<feature type="helix" evidence="6">
    <location>
        <begin position="191"/>
        <end position="201"/>
    </location>
</feature>
<feature type="helix" evidence="6">
    <location>
        <begin position="209"/>
        <end position="225"/>
    </location>
</feature>
<feature type="helix" evidence="6">
    <location>
        <begin position="235"/>
        <end position="246"/>
    </location>
</feature>
<feature type="helix" evidence="6">
    <location>
        <begin position="249"/>
        <end position="251"/>
    </location>
</feature>
<feature type="turn" evidence="6">
    <location>
        <begin position="254"/>
        <end position="256"/>
    </location>
</feature>
<feature type="helix" evidence="6">
    <location>
        <begin position="258"/>
        <end position="267"/>
    </location>
</feature>
<feature type="helix" evidence="6">
    <location>
        <begin position="273"/>
        <end position="304"/>
    </location>
</feature>
<feature type="helix" evidence="6">
    <location>
        <begin position="306"/>
        <end position="309"/>
    </location>
</feature>
<feature type="helix" evidence="6">
    <location>
        <begin position="317"/>
        <end position="327"/>
    </location>
</feature>
<feature type="helix" evidence="6">
    <location>
        <begin position="334"/>
        <end position="355"/>
    </location>
</feature>
<feature type="helix" evidence="6">
    <location>
        <begin position="360"/>
        <end position="372"/>
    </location>
</feature>
<feature type="helix" evidence="6">
    <location>
        <begin position="377"/>
        <end position="380"/>
    </location>
</feature>
<feature type="helix" evidence="6">
    <location>
        <begin position="383"/>
        <end position="407"/>
    </location>
</feature>
<feature type="helix" evidence="6">
    <location>
        <begin position="412"/>
        <end position="435"/>
    </location>
</feature>
<feature type="helix" evidence="6">
    <location>
        <begin position="441"/>
        <end position="451"/>
    </location>
</feature>
<feature type="helix" evidence="6">
    <location>
        <begin position="454"/>
        <end position="462"/>
    </location>
</feature>
<feature type="helix" evidence="6">
    <location>
        <begin position="472"/>
        <end position="479"/>
    </location>
</feature>
<feature type="helix" evidence="6">
    <location>
        <begin position="483"/>
        <end position="498"/>
    </location>
</feature>
<feature type="helix" evidence="6">
    <location>
        <begin position="513"/>
        <end position="521"/>
    </location>
</feature>
<feature type="helix" evidence="6">
    <location>
        <begin position="525"/>
        <end position="548"/>
    </location>
</feature>
<feature type="helix" evidence="6">
    <location>
        <begin position="555"/>
        <end position="571"/>
    </location>
</feature>
<feature type="turn" evidence="6">
    <location>
        <begin position="572"/>
        <end position="574"/>
    </location>
</feature>
<feature type="turn" evidence="7">
    <location>
        <begin position="577"/>
        <end position="581"/>
    </location>
</feature>
<feature type="helix" evidence="6">
    <location>
        <begin position="584"/>
        <end position="593"/>
    </location>
</feature>